<proteinExistence type="inferred from homology"/>
<organism>
    <name type="scientific">Paraburkholderia phymatum (strain DSM 17167 / CIP 108236 / LMG 21445 / STM815)</name>
    <name type="common">Burkholderia phymatum</name>
    <dbReference type="NCBI Taxonomy" id="391038"/>
    <lineage>
        <taxon>Bacteria</taxon>
        <taxon>Pseudomonadati</taxon>
        <taxon>Pseudomonadota</taxon>
        <taxon>Betaproteobacteria</taxon>
        <taxon>Burkholderiales</taxon>
        <taxon>Burkholderiaceae</taxon>
        <taxon>Paraburkholderia</taxon>
    </lineage>
</organism>
<accession>B2JHD8</accession>
<protein>
    <recommendedName>
        <fullName evidence="1">Large ribosomal subunit protein bL27</fullName>
    </recommendedName>
    <alternativeName>
        <fullName evidence="3">50S ribosomal protein L27</fullName>
    </alternativeName>
</protein>
<name>RL27_PARP8</name>
<dbReference type="EMBL" id="CP001043">
    <property type="protein sequence ID" value="ACC71823.1"/>
    <property type="molecule type" value="Genomic_DNA"/>
</dbReference>
<dbReference type="RefSeq" id="WP_012402025.1">
    <property type="nucleotide sequence ID" value="NC_010622.1"/>
</dbReference>
<dbReference type="SMR" id="B2JHD8"/>
<dbReference type="STRING" id="391038.Bphy_2651"/>
<dbReference type="KEGG" id="bph:Bphy_2651"/>
<dbReference type="eggNOG" id="COG0211">
    <property type="taxonomic scope" value="Bacteria"/>
</dbReference>
<dbReference type="HOGENOM" id="CLU_095424_4_1_4"/>
<dbReference type="OrthoDB" id="9803474at2"/>
<dbReference type="Proteomes" id="UP000001192">
    <property type="component" value="Chromosome 1"/>
</dbReference>
<dbReference type="GO" id="GO:0022625">
    <property type="term" value="C:cytosolic large ribosomal subunit"/>
    <property type="evidence" value="ECO:0007669"/>
    <property type="project" value="TreeGrafter"/>
</dbReference>
<dbReference type="GO" id="GO:0003735">
    <property type="term" value="F:structural constituent of ribosome"/>
    <property type="evidence" value="ECO:0007669"/>
    <property type="project" value="InterPro"/>
</dbReference>
<dbReference type="GO" id="GO:0006412">
    <property type="term" value="P:translation"/>
    <property type="evidence" value="ECO:0007669"/>
    <property type="project" value="UniProtKB-UniRule"/>
</dbReference>
<dbReference type="FunFam" id="2.40.50.100:FF:000001">
    <property type="entry name" value="50S ribosomal protein L27"/>
    <property type="match status" value="1"/>
</dbReference>
<dbReference type="Gene3D" id="2.40.50.100">
    <property type="match status" value="1"/>
</dbReference>
<dbReference type="HAMAP" id="MF_00539">
    <property type="entry name" value="Ribosomal_bL27"/>
    <property type="match status" value="1"/>
</dbReference>
<dbReference type="InterPro" id="IPR001684">
    <property type="entry name" value="Ribosomal_bL27"/>
</dbReference>
<dbReference type="InterPro" id="IPR018261">
    <property type="entry name" value="Ribosomal_bL27_CS"/>
</dbReference>
<dbReference type="NCBIfam" id="TIGR00062">
    <property type="entry name" value="L27"/>
    <property type="match status" value="1"/>
</dbReference>
<dbReference type="PANTHER" id="PTHR15893:SF0">
    <property type="entry name" value="LARGE RIBOSOMAL SUBUNIT PROTEIN BL27M"/>
    <property type="match status" value="1"/>
</dbReference>
<dbReference type="PANTHER" id="PTHR15893">
    <property type="entry name" value="RIBOSOMAL PROTEIN L27"/>
    <property type="match status" value="1"/>
</dbReference>
<dbReference type="Pfam" id="PF01016">
    <property type="entry name" value="Ribosomal_L27"/>
    <property type="match status" value="1"/>
</dbReference>
<dbReference type="PRINTS" id="PR00063">
    <property type="entry name" value="RIBOSOMALL27"/>
</dbReference>
<dbReference type="SUPFAM" id="SSF110324">
    <property type="entry name" value="Ribosomal L27 protein-like"/>
    <property type="match status" value="1"/>
</dbReference>
<dbReference type="PROSITE" id="PS00831">
    <property type="entry name" value="RIBOSOMAL_L27"/>
    <property type="match status" value="1"/>
</dbReference>
<gene>
    <name evidence="1" type="primary">rpmA</name>
    <name type="ordered locus">Bphy_2651</name>
</gene>
<comment type="similarity">
    <text evidence="1">Belongs to the bacterial ribosomal protein bL27 family.</text>
</comment>
<evidence type="ECO:0000255" key="1">
    <source>
        <dbReference type="HAMAP-Rule" id="MF_00539"/>
    </source>
</evidence>
<evidence type="ECO:0000256" key="2">
    <source>
        <dbReference type="SAM" id="MobiDB-lite"/>
    </source>
</evidence>
<evidence type="ECO:0000305" key="3"/>
<feature type="chain" id="PRO_1000128708" description="Large ribosomal subunit protein bL27">
    <location>
        <begin position="1"/>
        <end position="86"/>
    </location>
</feature>
<feature type="region of interest" description="Disordered" evidence="2">
    <location>
        <begin position="1"/>
        <end position="20"/>
    </location>
</feature>
<reference key="1">
    <citation type="journal article" date="2014" name="Stand. Genomic Sci.">
        <title>Complete genome sequence of Burkholderia phymatum STM815(T), a broad host range and efficient nitrogen-fixing symbiont of Mimosa species.</title>
        <authorList>
            <person name="Moulin L."/>
            <person name="Klonowska A."/>
            <person name="Caroline B."/>
            <person name="Booth K."/>
            <person name="Vriezen J.A."/>
            <person name="Melkonian R."/>
            <person name="James E.K."/>
            <person name="Young J.P."/>
            <person name="Bena G."/>
            <person name="Hauser L."/>
            <person name="Land M."/>
            <person name="Kyrpides N."/>
            <person name="Bruce D."/>
            <person name="Chain P."/>
            <person name="Copeland A."/>
            <person name="Pitluck S."/>
            <person name="Woyke T."/>
            <person name="Lizotte-Waniewski M."/>
            <person name="Bristow J."/>
            <person name="Riley M."/>
        </authorList>
    </citation>
    <scope>NUCLEOTIDE SEQUENCE [LARGE SCALE GENOMIC DNA]</scope>
    <source>
        <strain>DSM 17167 / CIP 108236 / LMG 21445 / STM815</strain>
    </source>
</reference>
<keyword id="KW-1185">Reference proteome</keyword>
<keyword id="KW-0687">Ribonucleoprotein</keyword>
<keyword id="KW-0689">Ribosomal protein</keyword>
<sequence>MAHKKAGGSSRNGRDSESKRLGVKVYGGQAILAGGIIVRQRGTRMHPGENVGIGKDHTLFALTDGHVKFTTKGAGKKHMVNVVPAV</sequence>